<proteinExistence type="inferred from homology"/>
<organism>
    <name type="scientific">Salinibacter ruber (strain DSM 13855 / M31)</name>
    <dbReference type="NCBI Taxonomy" id="309807"/>
    <lineage>
        <taxon>Bacteria</taxon>
        <taxon>Pseudomonadati</taxon>
        <taxon>Rhodothermota</taxon>
        <taxon>Rhodothermia</taxon>
        <taxon>Rhodothermales</taxon>
        <taxon>Salinibacteraceae</taxon>
        <taxon>Salinibacter</taxon>
    </lineage>
</organism>
<evidence type="ECO:0000255" key="1">
    <source>
        <dbReference type="HAMAP-Rule" id="MF_01331"/>
    </source>
</evidence>
<evidence type="ECO:0000305" key="2"/>
<reference key="1">
    <citation type="journal article" date="2005" name="Proc. Natl. Acad. Sci. U.S.A.">
        <title>The genome of Salinibacter ruber: convergence and gene exchange among hyperhalophilic bacteria and archaea.</title>
        <authorList>
            <person name="Mongodin E.F."/>
            <person name="Nelson K.E."/>
            <person name="Daugherty S."/>
            <person name="DeBoy R.T."/>
            <person name="Wister J."/>
            <person name="Khouri H."/>
            <person name="Weidman J."/>
            <person name="Walsh D.A."/>
            <person name="Papke R.T."/>
            <person name="Sanchez Perez G."/>
            <person name="Sharma A.K."/>
            <person name="Nesbo C.L."/>
            <person name="MacLeod D."/>
            <person name="Bapteste E."/>
            <person name="Doolittle W.F."/>
            <person name="Charlebois R.L."/>
            <person name="Legault B."/>
            <person name="Rodriguez-Valera F."/>
        </authorList>
    </citation>
    <scope>NUCLEOTIDE SEQUENCE [LARGE SCALE GENOMIC DNA]</scope>
    <source>
        <strain>DSM 13855 / CECT 5946 / M31</strain>
    </source>
</reference>
<comment type="function">
    <text evidence="1">This protein binds specifically to 23S rRNA; its binding is stimulated by other ribosomal proteins, e.g. L4, L17, and L20. It is important during the early stages of 50S assembly. It makes multiple contacts with different domains of the 23S rRNA in the assembled 50S subunit and ribosome (By similarity).</text>
</comment>
<comment type="function">
    <text evidence="1">The globular domain of the protein is located near the polypeptide exit tunnel on the outside of the subunit, while an extended beta-hairpin is found that lines the wall of the exit tunnel in the center of the 70S ribosome.</text>
</comment>
<comment type="subunit">
    <text evidence="1">Part of the 50S ribosomal subunit.</text>
</comment>
<comment type="similarity">
    <text evidence="1">Belongs to the universal ribosomal protein uL22 family.</text>
</comment>
<sequence>MQARAVRRHIRSSPLKMRRVINLVRDRSVPEAVAILDYMPQKVTGVVEKTIRSAVYNLMDQHDERFDEGALKLKEIRADEGPTFQRHQARARGRAAPIRKRTTHLKVVVAVEEEAPEEAAA</sequence>
<dbReference type="EMBL" id="CP000159">
    <property type="protein sequence ID" value="ABC45723.1"/>
    <property type="molecule type" value="Genomic_DNA"/>
</dbReference>
<dbReference type="RefSeq" id="WP_011403800.1">
    <property type="nucleotide sequence ID" value="NC_007677.1"/>
</dbReference>
<dbReference type="RefSeq" id="YP_445172.1">
    <property type="nucleotide sequence ID" value="NC_007677.1"/>
</dbReference>
<dbReference type="SMR" id="Q2S3Q9"/>
<dbReference type="STRING" id="309807.SRU_1040"/>
<dbReference type="EnsemblBacteria" id="ABC45723">
    <property type="protein sequence ID" value="ABC45723"/>
    <property type="gene ID" value="SRU_1040"/>
</dbReference>
<dbReference type="GeneID" id="83727969"/>
<dbReference type="KEGG" id="sru:SRU_1040"/>
<dbReference type="eggNOG" id="COG0091">
    <property type="taxonomic scope" value="Bacteria"/>
</dbReference>
<dbReference type="HOGENOM" id="CLU_083987_3_1_10"/>
<dbReference type="OrthoDB" id="9805969at2"/>
<dbReference type="Proteomes" id="UP000008674">
    <property type="component" value="Chromosome"/>
</dbReference>
<dbReference type="GO" id="GO:0022625">
    <property type="term" value="C:cytosolic large ribosomal subunit"/>
    <property type="evidence" value="ECO:0007669"/>
    <property type="project" value="TreeGrafter"/>
</dbReference>
<dbReference type="GO" id="GO:0019843">
    <property type="term" value="F:rRNA binding"/>
    <property type="evidence" value="ECO:0007669"/>
    <property type="project" value="UniProtKB-UniRule"/>
</dbReference>
<dbReference type="GO" id="GO:0003735">
    <property type="term" value="F:structural constituent of ribosome"/>
    <property type="evidence" value="ECO:0007669"/>
    <property type="project" value="InterPro"/>
</dbReference>
<dbReference type="GO" id="GO:0006412">
    <property type="term" value="P:translation"/>
    <property type="evidence" value="ECO:0007669"/>
    <property type="project" value="UniProtKB-UniRule"/>
</dbReference>
<dbReference type="CDD" id="cd00336">
    <property type="entry name" value="Ribosomal_L22"/>
    <property type="match status" value="1"/>
</dbReference>
<dbReference type="Gene3D" id="3.90.470.10">
    <property type="entry name" value="Ribosomal protein L22/L17"/>
    <property type="match status" value="1"/>
</dbReference>
<dbReference type="HAMAP" id="MF_01331_B">
    <property type="entry name" value="Ribosomal_uL22_B"/>
    <property type="match status" value="1"/>
</dbReference>
<dbReference type="InterPro" id="IPR001063">
    <property type="entry name" value="Ribosomal_uL22"/>
</dbReference>
<dbReference type="InterPro" id="IPR005727">
    <property type="entry name" value="Ribosomal_uL22_bac/chlpt-type"/>
</dbReference>
<dbReference type="InterPro" id="IPR047867">
    <property type="entry name" value="Ribosomal_uL22_bac/org-type"/>
</dbReference>
<dbReference type="InterPro" id="IPR018260">
    <property type="entry name" value="Ribosomal_uL22_CS"/>
</dbReference>
<dbReference type="InterPro" id="IPR036394">
    <property type="entry name" value="Ribosomal_uL22_sf"/>
</dbReference>
<dbReference type="NCBIfam" id="TIGR01044">
    <property type="entry name" value="rplV_bact"/>
    <property type="match status" value="1"/>
</dbReference>
<dbReference type="PANTHER" id="PTHR13501">
    <property type="entry name" value="CHLOROPLAST 50S RIBOSOMAL PROTEIN L22-RELATED"/>
    <property type="match status" value="1"/>
</dbReference>
<dbReference type="PANTHER" id="PTHR13501:SF8">
    <property type="entry name" value="LARGE RIBOSOMAL SUBUNIT PROTEIN UL22M"/>
    <property type="match status" value="1"/>
</dbReference>
<dbReference type="Pfam" id="PF00237">
    <property type="entry name" value="Ribosomal_L22"/>
    <property type="match status" value="1"/>
</dbReference>
<dbReference type="SUPFAM" id="SSF54843">
    <property type="entry name" value="Ribosomal protein L22"/>
    <property type="match status" value="1"/>
</dbReference>
<dbReference type="PROSITE" id="PS00464">
    <property type="entry name" value="RIBOSOMAL_L22"/>
    <property type="match status" value="1"/>
</dbReference>
<gene>
    <name evidence="1" type="primary">rplV</name>
    <name type="ordered locus">SRU_1040</name>
</gene>
<feature type="chain" id="PRO_0000243202" description="Large ribosomal subunit protein uL22">
    <location>
        <begin position="1"/>
        <end position="121"/>
    </location>
</feature>
<keyword id="KW-1185">Reference proteome</keyword>
<keyword id="KW-0687">Ribonucleoprotein</keyword>
<keyword id="KW-0689">Ribosomal protein</keyword>
<keyword id="KW-0694">RNA-binding</keyword>
<keyword id="KW-0699">rRNA-binding</keyword>
<accession>Q2S3Q9</accession>
<name>RL22_SALRD</name>
<protein>
    <recommendedName>
        <fullName evidence="1">Large ribosomal subunit protein uL22</fullName>
    </recommendedName>
    <alternativeName>
        <fullName evidence="2">50S ribosomal protein L22</fullName>
    </alternativeName>
</protein>